<keyword id="KW-0010">Activator</keyword>
<keyword id="KW-0217">Developmental protein</keyword>
<keyword id="KW-0238">DNA-binding</keyword>
<keyword id="KW-0539">Nucleus</keyword>
<keyword id="KW-0804">Transcription</keyword>
<keyword id="KW-0805">Transcription regulation</keyword>
<evidence type="ECO:0000250" key="1"/>
<evidence type="ECO:0000250" key="2">
    <source>
        <dbReference type="UniProtKB" id="O15178"/>
    </source>
</evidence>
<evidence type="ECO:0000255" key="3">
    <source>
        <dbReference type="PROSITE-ProRule" id="PRU00201"/>
    </source>
</evidence>
<evidence type="ECO:0000256" key="4">
    <source>
        <dbReference type="SAM" id="MobiDB-lite"/>
    </source>
</evidence>
<evidence type="ECO:0000305" key="5"/>
<dbReference type="EMBL" id="D50332">
    <property type="protein sequence ID" value="BAA08869.1"/>
    <property type="molecule type" value="mRNA"/>
</dbReference>
<dbReference type="SMR" id="Q25113"/>
<dbReference type="GO" id="GO:0000785">
    <property type="term" value="C:chromatin"/>
    <property type="evidence" value="ECO:0007669"/>
    <property type="project" value="TreeGrafter"/>
</dbReference>
<dbReference type="GO" id="GO:0005634">
    <property type="term" value="C:nucleus"/>
    <property type="evidence" value="ECO:0007669"/>
    <property type="project" value="UniProtKB-SubCell"/>
</dbReference>
<dbReference type="GO" id="GO:0000981">
    <property type="term" value="F:DNA-binding transcription factor activity, RNA polymerase II-specific"/>
    <property type="evidence" value="ECO:0007669"/>
    <property type="project" value="TreeGrafter"/>
</dbReference>
<dbReference type="GO" id="GO:0000978">
    <property type="term" value="F:RNA polymerase II cis-regulatory region sequence-specific DNA binding"/>
    <property type="evidence" value="ECO:0007669"/>
    <property type="project" value="InterPro"/>
</dbReference>
<dbReference type="GO" id="GO:0001708">
    <property type="term" value="P:cell fate specification"/>
    <property type="evidence" value="ECO:0007669"/>
    <property type="project" value="TreeGrafter"/>
</dbReference>
<dbReference type="GO" id="GO:0003007">
    <property type="term" value="P:heart morphogenesis"/>
    <property type="evidence" value="ECO:0007669"/>
    <property type="project" value="TreeGrafter"/>
</dbReference>
<dbReference type="GO" id="GO:0001707">
    <property type="term" value="P:mesoderm formation"/>
    <property type="evidence" value="ECO:0007669"/>
    <property type="project" value="TreeGrafter"/>
</dbReference>
<dbReference type="GO" id="GO:0045893">
    <property type="term" value="P:positive regulation of DNA-templated transcription"/>
    <property type="evidence" value="ECO:0007669"/>
    <property type="project" value="InterPro"/>
</dbReference>
<dbReference type="CDD" id="cd20192">
    <property type="entry name" value="T-box_TBXT_TBX19-like"/>
    <property type="match status" value="1"/>
</dbReference>
<dbReference type="FunFam" id="2.60.40.820:FF:000002">
    <property type="entry name" value="T-box transcription factor Brachyury"/>
    <property type="match status" value="1"/>
</dbReference>
<dbReference type="Gene3D" id="2.60.40.820">
    <property type="entry name" value="Transcription factor, T-box"/>
    <property type="match status" value="1"/>
</dbReference>
<dbReference type="InterPro" id="IPR008967">
    <property type="entry name" value="p53-like_TF_DNA-bd_sf"/>
</dbReference>
<dbReference type="InterPro" id="IPR046360">
    <property type="entry name" value="T-box_DNA-bd"/>
</dbReference>
<dbReference type="InterPro" id="IPR036960">
    <property type="entry name" value="T-box_sf"/>
</dbReference>
<dbReference type="InterPro" id="IPR002070">
    <property type="entry name" value="TF_Brachyury"/>
</dbReference>
<dbReference type="InterPro" id="IPR001699">
    <property type="entry name" value="TF_T-box"/>
</dbReference>
<dbReference type="InterPro" id="IPR018186">
    <property type="entry name" value="TF_T-box_CS"/>
</dbReference>
<dbReference type="PANTHER" id="PTHR11267">
    <property type="entry name" value="T-BOX PROTEIN-RELATED"/>
    <property type="match status" value="1"/>
</dbReference>
<dbReference type="PANTHER" id="PTHR11267:SF106">
    <property type="entry name" value="T-RELATED PROTEIN"/>
    <property type="match status" value="1"/>
</dbReference>
<dbReference type="Pfam" id="PF00907">
    <property type="entry name" value="T-box"/>
    <property type="match status" value="1"/>
</dbReference>
<dbReference type="PRINTS" id="PR00938">
    <property type="entry name" value="BRACHYURY"/>
</dbReference>
<dbReference type="PRINTS" id="PR00937">
    <property type="entry name" value="TBOX"/>
</dbReference>
<dbReference type="SMART" id="SM00425">
    <property type="entry name" value="TBOX"/>
    <property type="match status" value="1"/>
</dbReference>
<dbReference type="SUPFAM" id="SSF49417">
    <property type="entry name" value="p53-like transcription factors"/>
    <property type="match status" value="1"/>
</dbReference>
<dbReference type="PROSITE" id="PS01283">
    <property type="entry name" value="TBOX_1"/>
    <property type="match status" value="1"/>
</dbReference>
<dbReference type="PROSITE" id="PS01264">
    <property type="entry name" value="TBOX_2"/>
    <property type="match status" value="1"/>
</dbReference>
<dbReference type="PROSITE" id="PS50252">
    <property type="entry name" value="TBOX_3"/>
    <property type="match status" value="1"/>
</dbReference>
<gene>
    <name evidence="2" type="primary">TBXT</name>
    <name type="synonym">TA</name>
</gene>
<comment type="function">
    <text evidence="1">Involved in the transcriptional regulation of genes required for mesoderm differentiation.</text>
</comment>
<comment type="subcellular location">
    <subcellularLocation>
        <location evidence="3">Nucleus</location>
    </subcellularLocation>
</comment>
<comment type="tissue specificity">
    <text>In the developing embryo, expressed in the mesenchyme founder cells, vegetal plate of the mesenchyme blastula, extending tip of the invaginating archenteron and, later, in the secondary mesenchyme cells.</text>
</comment>
<comment type="developmental stage">
    <text>First detected in the swimming blastula, maximally expressed in the gastrula. Levels decrease in the prism larval stage and are barely detectable by the pluteus larval stage.</text>
</comment>
<protein>
    <recommendedName>
        <fullName evidence="5">T-box transcription factor T homolog</fullName>
    </recommendedName>
    <alternativeName>
        <fullName>Brachyury protein homolog</fullName>
    </alternativeName>
    <alternativeName>
        <fullName>HpTa</fullName>
    </alternativeName>
    <alternativeName>
        <fullName>Protein T</fullName>
    </alternativeName>
</protein>
<accession>Q25113</accession>
<proteinExistence type="evidence at transcript level"/>
<name>TBXT_HEMPU</name>
<reference key="1">
    <citation type="journal article" date="1995" name="Development">
        <title>A sea urchin homologue of the chordate Brachyury (T) gene is expressed in the secondary mesenchyme founder cells.</title>
        <authorList>
            <person name="Harada Y."/>
            <person name="Yasuo H."/>
            <person name="Satoh N."/>
        </authorList>
    </citation>
    <scope>NUCLEOTIDE SEQUENCE [MRNA]</scope>
    <source>
        <tissue>Embryo</tissue>
    </source>
</reference>
<sequence length="434" mass="46714">MPAMSADALRAPSYNVSHLLNAVQSEMNRGSEKGDPSEEGLKVRLDDVELWKKFHKLTNEMIVTKSGRRMFPVLSASIAGLDPNSMYSVLLDFSAADDHRWKYVNGEWIPGGKPDGSPPTTAYIHPDSPNFGAHWMKQAVNFSKVKLSNKLNGSGQVMLNSLHKYEPRIHIIRVGGREKQRLVGSYSFTETRFIAVTAYQNEDITQLKIKYNPFAKAFLDIKDKNDGHDLFDDVHDFQGSKYPQFGGWFLPGSGAFGPTPHQFNPSIGLPSHAGCDRYGGLRSHRTSPYPPPPYHQKYSAAGAGYGAEASAGLSSSISLLAADSWSSLANSTSAASSMPACSQYGSMWPSTAATSGFSHVSSPQSPLPTGLFRNPHPTSSHQHNLASTAHGMAPVASGLPSAAVTTANSSEAHALSQSVMAPGECRASDNAGYL</sequence>
<organism>
    <name type="scientific">Hemicentrotus pulcherrimus</name>
    <name type="common">Sea urchin</name>
    <name type="synonym">Strongylocentrotus pulcherrimus</name>
    <dbReference type="NCBI Taxonomy" id="7650"/>
    <lineage>
        <taxon>Eukaryota</taxon>
        <taxon>Metazoa</taxon>
        <taxon>Echinodermata</taxon>
        <taxon>Eleutherozoa</taxon>
        <taxon>Echinozoa</taxon>
        <taxon>Echinoidea</taxon>
        <taxon>Euechinoidea</taxon>
        <taxon>Echinacea</taxon>
        <taxon>Camarodonta</taxon>
        <taxon>Echinidea</taxon>
        <taxon>Strongylocentrotidae</taxon>
        <taxon>Hemicentrotus</taxon>
    </lineage>
</organism>
<feature type="chain" id="PRO_0000184422" description="T-box transcription factor T homolog">
    <location>
        <begin position="1"/>
        <end position="434"/>
    </location>
</feature>
<feature type="DNA-binding region" description="T-box" evidence="3">
    <location>
        <begin position="50"/>
        <end position="220"/>
    </location>
</feature>
<feature type="region of interest" description="Disordered" evidence="4">
    <location>
        <begin position="355"/>
        <end position="385"/>
    </location>
</feature>
<feature type="compositionally biased region" description="Polar residues" evidence="4">
    <location>
        <begin position="355"/>
        <end position="364"/>
    </location>
</feature>
<feature type="compositionally biased region" description="Polar residues" evidence="4">
    <location>
        <begin position="376"/>
        <end position="385"/>
    </location>
</feature>